<reference key="1">
    <citation type="journal article" date="2002" name="Proc. Natl. Acad. Sci. U.S.A.">
        <title>Extensive mosaic structure revealed by the complete genome sequence of uropathogenic Escherichia coli.</title>
        <authorList>
            <person name="Welch R.A."/>
            <person name="Burland V."/>
            <person name="Plunkett G. III"/>
            <person name="Redford P."/>
            <person name="Roesch P."/>
            <person name="Rasko D."/>
            <person name="Buckles E.L."/>
            <person name="Liou S.-R."/>
            <person name="Boutin A."/>
            <person name="Hackett J."/>
            <person name="Stroud D."/>
            <person name="Mayhew G.F."/>
            <person name="Rose D.J."/>
            <person name="Zhou S."/>
            <person name="Schwartz D.C."/>
            <person name="Perna N.T."/>
            <person name="Mobley H.L.T."/>
            <person name="Donnenberg M.S."/>
            <person name="Blattner F.R."/>
        </authorList>
    </citation>
    <scope>NUCLEOTIDE SEQUENCE [LARGE SCALE GENOMIC DNA]</scope>
    <source>
        <strain>CFT073 / ATCC 700928 / UPEC</strain>
    </source>
</reference>
<sequence length="304" mass="33380">MSWIERIKSNITPTRKASIPEGVWTKCDSCGQVLYRAELERNLEVCPKCDHHMRMTARNRLHSLLDEGSLVELGSELEPKDVLKFRDSKKYKDRLASAQKETDEKDALVVMKGTLYGMPVVAAAFEFAFMGGSMGSVVGARFVRAVEQALEDNCPLICFSASGGARMQEALMSLMQMAKTSAALAKMQERGLPYISVLTDPTMGGVSASFAMLGDLNIAEPKALIGFAGPRVIEQTVREKLPPGFQRSEFLIEKGAIDMIVRRPEMRLKLASILAKLMNLPAPNPEAPREGVVVPPVPDQEPEA</sequence>
<comment type="function">
    <text evidence="1">Component of the acetyl coenzyme A carboxylase (ACC) complex. Biotin carboxylase (BC) catalyzes the carboxylation of biotin on its carrier protein (BCCP) and then the CO(2) group is transferred by the transcarboxylase to acetyl-CoA to form malonyl-CoA.</text>
</comment>
<comment type="catalytic activity">
    <reaction evidence="1">
        <text>N(6)-carboxybiotinyl-L-lysyl-[protein] + acetyl-CoA = N(6)-biotinyl-L-lysyl-[protein] + malonyl-CoA</text>
        <dbReference type="Rhea" id="RHEA:54728"/>
        <dbReference type="Rhea" id="RHEA-COMP:10505"/>
        <dbReference type="Rhea" id="RHEA-COMP:10506"/>
        <dbReference type="ChEBI" id="CHEBI:57288"/>
        <dbReference type="ChEBI" id="CHEBI:57384"/>
        <dbReference type="ChEBI" id="CHEBI:83144"/>
        <dbReference type="ChEBI" id="CHEBI:83145"/>
        <dbReference type="EC" id="2.1.3.15"/>
    </reaction>
</comment>
<comment type="cofactor">
    <cofactor evidence="1">
        <name>Zn(2+)</name>
        <dbReference type="ChEBI" id="CHEBI:29105"/>
    </cofactor>
    <text evidence="1">Binds 1 zinc ion per subunit.</text>
</comment>
<comment type="pathway">
    <text evidence="1">Lipid metabolism; malonyl-CoA biosynthesis; malonyl-CoA from acetyl-CoA: step 1/1.</text>
</comment>
<comment type="subunit">
    <text evidence="1">Acetyl-CoA carboxylase is a heterohexamer composed of biotin carboxyl carrier protein (AccB), biotin carboxylase (AccC) and two subunits each of ACCase subunit alpha (AccA) and ACCase subunit beta (AccD).</text>
</comment>
<comment type="subcellular location">
    <subcellularLocation>
        <location evidence="1">Cytoplasm</location>
    </subcellularLocation>
</comment>
<comment type="similarity">
    <text evidence="1">Belongs to the AccD/PCCB family.</text>
</comment>
<comment type="sequence caution" evidence="4">
    <conflict type="erroneous initiation">
        <sequence resource="EMBL-CDS" id="AAN81313"/>
    </conflict>
    <text>Extended N-terminus.</text>
</comment>
<accession>Q8FFH5</accession>
<keyword id="KW-0067">ATP-binding</keyword>
<keyword id="KW-0963">Cytoplasm</keyword>
<keyword id="KW-0275">Fatty acid biosynthesis</keyword>
<keyword id="KW-0276">Fatty acid metabolism</keyword>
<keyword id="KW-0444">Lipid biosynthesis</keyword>
<keyword id="KW-0443">Lipid metabolism</keyword>
<keyword id="KW-0479">Metal-binding</keyword>
<keyword id="KW-0547">Nucleotide-binding</keyword>
<keyword id="KW-1185">Reference proteome</keyword>
<keyword id="KW-0808">Transferase</keyword>
<keyword id="KW-0862">Zinc</keyword>
<keyword id="KW-0863">Zinc-finger</keyword>
<proteinExistence type="inferred from homology"/>
<protein>
    <recommendedName>
        <fullName evidence="1">Acetyl-coenzyme A carboxylase carboxyl transferase subunit beta</fullName>
        <shortName evidence="1">ACCase subunit beta</shortName>
        <shortName evidence="1">Acetyl-CoA carboxylase carboxyltransferase subunit beta</shortName>
        <ecNumber evidence="1">2.1.3.15</ecNumber>
    </recommendedName>
</protein>
<evidence type="ECO:0000255" key="1">
    <source>
        <dbReference type="HAMAP-Rule" id="MF_01395"/>
    </source>
</evidence>
<evidence type="ECO:0000255" key="2">
    <source>
        <dbReference type="PROSITE-ProRule" id="PRU01136"/>
    </source>
</evidence>
<evidence type="ECO:0000256" key="3">
    <source>
        <dbReference type="SAM" id="MobiDB-lite"/>
    </source>
</evidence>
<evidence type="ECO:0000305" key="4"/>
<feature type="chain" id="PRO_0000358991" description="Acetyl-coenzyme A carboxylase carboxyl transferase subunit beta">
    <location>
        <begin position="1"/>
        <end position="304"/>
    </location>
</feature>
<feature type="domain" description="CoA carboxyltransferase N-terminal" evidence="2">
    <location>
        <begin position="23"/>
        <end position="292"/>
    </location>
</feature>
<feature type="zinc finger region" description="C4-type" evidence="1">
    <location>
        <begin position="27"/>
        <end position="49"/>
    </location>
</feature>
<feature type="region of interest" description="Disordered" evidence="3">
    <location>
        <begin position="285"/>
        <end position="304"/>
    </location>
</feature>
<feature type="compositionally biased region" description="Pro residues" evidence="3">
    <location>
        <begin position="295"/>
        <end position="304"/>
    </location>
</feature>
<feature type="binding site" evidence="1">
    <location>
        <position position="27"/>
    </location>
    <ligand>
        <name>Zn(2+)</name>
        <dbReference type="ChEBI" id="CHEBI:29105"/>
    </ligand>
</feature>
<feature type="binding site" evidence="1">
    <location>
        <position position="30"/>
    </location>
    <ligand>
        <name>Zn(2+)</name>
        <dbReference type="ChEBI" id="CHEBI:29105"/>
    </ligand>
</feature>
<feature type="binding site" evidence="1">
    <location>
        <position position="46"/>
    </location>
    <ligand>
        <name>Zn(2+)</name>
        <dbReference type="ChEBI" id="CHEBI:29105"/>
    </ligand>
</feature>
<feature type="binding site" evidence="1">
    <location>
        <position position="49"/>
    </location>
    <ligand>
        <name>Zn(2+)</name>
        <dbReference type="ChEBI" id="CHEBI:29105"/>
    </ligand>
</feature>
<gene>
    <name evidence="1" type="primary">accD</name>
    <name type="ordered locus">c2861</name>
</gene>
<organism>
    <name type="scientific">Escherichia coli O6:H1 (strain CFT073 / ATCC 700928 / UPEC)</name>
    <dbReference type="NCBI Taxonomy" id="199310"/>
    <lineage>
        <taxon>Bacteria</taxon>
        <taxon>Pseudomonadati</taxon>
        <taxon>Pseudomonadota</taxon>
        <taxon>Gammaproteobacteria</taxon>
        <taxon>Enterobacterales</taxon>
        <taxon>Enterobacteriaceae</taxon>
        <taxon>Escherichia</taxon>
    </lineage>
</organism>
<dbReference type="EC" id="2.1.3.15" evidence="1"/>
<dbReference type="EMBL" id="AE014075">
    <property type="protein sequence ID" value="AAN81313.1"/>
    <property type="status" value="ALT_INIT"/>
    <property type="molecule type" value="Genomic_DNA"/>
</dbReference>
<dbReference type="RefSeq" id="WP_000118393.1">
    <property type="nucleotide sequence ID" value="NC_004431.1"/>
</dbReference>
<dbReference type="SMR" id="Q8FFH5"/>
<dbReference type="STRING" id="199310.c2861"/>
<dbReference type="KEGG" id="ecc:c2861"/>
<dbReference type="eggNOG" id="COG0777">
    <property type="taxonomic scope" value="Bacteria"/>
</dbReference>
<dbReference type="HOGENOM" id="CLU_015486_1_0_6"/>
<dbReference type="UniPathway" id="UPA00655">
    <property type="reaction ID" value="UER00711"/>
</dbReference>
<dbReference type="Proteomes" id="UP000001410">
    <property type="component" value="Chromosome"/>
</dbReference>
<dbReference type="GO" id="GO:0009329">
    <property type="term" value="C:acetate CoA-transferase complex"/>
    <property type="evidence" value="ECO:0007669"/>
    <property type="project" value="TreeGrafter"/>
</dbReference>
<dbReference type="GO" id="GO:0003989">
    <property type="term" value="F:acetyl-CoA carboxylase activity"/>
    <property type="evidence" value="ECO:0007669"/>
    <property type="project" value="InterPro"/>
</dbReference>
<dbReference type="GO" id="GO:0005524">
    <property type="term" value="F:ATP binding"/>
    <property type="evidence" value="ECO:0007669"/>
    <property type="project" value="UniProtKB-KW"/>
</dbReference>
<dbReference type="GO" id="GO:0016743">
    <property type="term" value="F:carboxyl- or carbamoyltransferase activity"/>
    <property type="evidence" value="ECO:0007669"/>
    <property type="project" value="UniProtKB-UniRule"/>
</dbReference>
<dbReference type="GO" id="GO:0008270">
    <property type="term" value="F:zinc ion binding"/>
    <property type="evidence" value="ECO:0007669"/>
    <property type="project" value="UniProtKB-UniRule"/>
</dbReference>
<dbReference type="GO" id="GO:0006633">
    <property type="term" value="P:fatty acid biosynthetic process"/>
    <property type="evidence" value="ECO:0007669"/>
    <property type="project" value="UniProtKB-KW"/>
</dbReference>
<dbReference type="GO" id="GO:2001295">
    <property type="term" value="P:malonyl-CoA biosynthetic process"/>
    <property type="evidence" value="ECO:0007669"/>
    <property type="project" value="UniProtKB-UniRule"/>
</dbReference>
<dbReference type="FunFam" id="3.90.226.10:FF:000013">
    <property type="entry name" value="Acetyl-coenzyme A carboxylase carboxyl transferase subunit beta"/>
    <property type="match status" value="1"/>
</dbReference>
<dbReference type="Gene3D" id="3.90.226.10">
    <property type="entry name" value="2-enoyl-CoA Hydratase, Chain A, domain 1"/>
    <property type="match status" value="1"/>
</dbReference>
<dbReference type="HAMAP" id="MF_01395">
    <property type="entry name" value="AcetylCoA_CT_beta"/>
    <property type="match status" value="1"/>
</dbReference>
<dbReference type="InterPro" id="IPR034733">
    <property type="entry name" value="AcCoA_carboxyl_beta"/>
</dbReference>
<dbReference type="InterPro" id="IPR000438">
    <property type="entry name" value="Acetyl_CoA_COase_Trfase_b_su"/>
</dbReference>
<dbReference type="InterPro" id="IPR029045">
    <property type="entry name" value="ClpP/crotonase-like_dom_sf"/>
</dbReference>
<dbReference type="InterPro" id="IPR011762">
    <property type="entry name" value="COA_CT_N"/>
</dbReference>
<dbReference type="InterPro" id="IPR041010">
    <property type="entry name" value="Znf-ACC"/>
</dbReference>
<dbReference type="NCBIfam" id="TIGR00515">
    <property type="entry name" value="accD"/>
    <property type="match status" value="1"/>
</dbReference>
<dbReference type="PANTHER" id="PTHR42995">
    <property type="entry name" value="ACETYL-COENZYME A CARBOXYLASE CARBOXYL TRANSFERASE SUBUNIT BETA, CHLOROPLASTIC"/>
    <property type="match status" value="1"/>
</dbReference>
<dbReference type="PANTHER" id="PTHR42995:SF5">
    <property type="entry name" value="ACETYL-COENZYME A CARBOXYLASE CARBOXYL TRANSFERASE SUBUNIT BETA, CHLOROPLASTIC"/>
    <property type="match status" value="1"/>
</dbReference>
<dbReference type="Pfam" id="PF01039">
    <property type="entry name" value="Carboxyl_trans"/>
    <property type="match status" value="1"/>
</dbReference>
<dbReference type="Pfam" id="PF17848">
    <property type="entry name" value="Zn_ribbon_ACC"/>
    <property type="match status" value="1"/>
</dbReference>
<dbReference type="PRINTS" id="PR01070">
    <property type="entry name" value="ACCCTRFRASEB"/>
</dbReference>
<dbReference type="SUPFAM" id="SSF52096">
    <property type="entry name" value="ClpP/crotonase"/>
    <property type="match status" value="1"/>
</dbReference>
<dbReference type="PROSITE" id="PS50980">
    <property type="entry name" value="COA_CT_NTER"/>
    <property type="match status" value="1"/>
</dbReference>
<name>ACCD_ECOL6</name>